<protein>
    <recommendedName>
        <fullName evidence="1">UPF0154 protein SSU98_1719</fullName>
    </recommendedName>
</protein>
<organism>
    <name type="scientific">Streptococcus suis (strain 98HAH33)</name>
    <dbReference type="NCBI Taxonomy" id="391296"/>
    <lineage>
        <taxon>Bacteria</taxon>
        <taxon>Bacillati</taxon>
        <taxon>Bacillota</taxon>
        <taxon>Bacilli</taxon>
        <taxon>Lactobacillales</taxon>
        <taxon>Streptococcaceae</taxon>
        <taxon>Streptococcus</taxon>
    </lineage>
</organism>
<comment type="subcellular location">
    <subcellularLocation>
        <location evidence="1">Cell membrane</location>
        <topology evidence="1">Single-pass membrane protein</topology>
    </subcellularLocation>
</comment>
<comment type="similarity">
    <text evidence="1">Belongs to the UPF0154 family.</text>
</comment>
<accession>A4W3D8</accession>
<name>Y1719_STRS2</name>
<evidence type="ECO:0000255" key="1">
    <source>
        <dbReference type="HAMAP-Rule" id="MF_00363"/>
    </source>
</evidence>
<gene>
    <name type="ordered locus">SSU98_1719</name>
</gene>
<sequence length="78" mass="8653">MNLGLAILLIVLAFAGGVALGIYLSRRQVENYIADKPILDENALRLMMSQMGQKPSEAKVQQVLRQIKSQQKVASKKK</sequence>
<dbReference type="EMBL" id="CP000408">
    <property type="protein sequence ID" value="ABP92877.1"/>
    <property type="molecule type" value="Genomic_DNA"/>
</dbReference>
<dbReference type="SMR" id="A4W3D8"/>
<dbReference type="KEGG" id="ssv:SSU98_1719"/>
<dbReference type="HOGENOM" id="CLU_180108_0_0_9"/>
<dbReference type="BioCyc" id="SSUI391296:GI2E-1775-MONOMER"/>
<dbReference type="GO" id="GO:0005886">
    <property type="term" value="C:plasma membrane"/>
    <property type="evidence" value="ECO:0007669"/>
    <property type="project" value="UniProtKB-SubCell"/>
</dbReference>
<dbReference type="HAMAP" id="MF_00363">
    <property type="entry name" value="UPF0154"/>
    <property type="match status" value="1"/>
</dbReference>
<dbReference type="InterPro" id="IPR005359">
    <property type="entry name" value="UPF0154"/>
</dbReference>
<dbReference type="Pfam" id="PF03672">
    <property type="entry name" value="UPF0154"/>
    <property type="match status" value="1"/>
</dbReference>
<feature type="chain" id="PRO_1000005647" description="UPF0154 protein SSU98_1719">
    <location>
        <begin position="1"/>
        <end position="78"/>
    </location>
</feature>
<feature type="transmembrane region" description="Helical" evidence="1">
    <location>
        <begin position="3"/>
        <end position="23"/>
    </location>
</feature>
<proteinExistence type="inferred from homology"/>
<keyword id="KW-1003">Cell membrane</keyword>
<keyword id="KW-0472">Membrane</keyword>
<keyword id="KW-0812">Transmembrane</keyword>
<keyword id="KW-1133">Transmembrane helix</keyword>
<reference key="1">
    <citation type="journal article" date="2007" name="PLoS ONE">
        <title>A glimpse of streptococcal toxic shock syndrome from comparative genomics of S. suis 2 Chinese isolates.</title>
        <authorList>
            <person name="Chen C."/>
            <person name="Tang J."/>
            <person name="Dong W."/>
            <person name="Wang C."/>
            <person name="Feng Y."/>
            <person name="Wang J."/>
            <person name="Zheng F."/>
            <person name="Pan X."/>
            <person name="Liu D."/>
            <person name="Li M."/>
            <person name="Song Y."/>
            <person name="Zhu X."/>
            <person name="Sun H."/>
            <person name="Feng T."/>
            <person name="Guo Z."/>
            <person name="Ju A."/>
            <person name="Ge J."/>
            <person name="Dong Y."/>
            <person name="Sun W."/>
            <person name="Jiang Y."/>
            <person name="Wang J."/>
            <person name="Yan J."/>
            <person name="Yang H."/>
            <person name="Wang X."/>
            <person name="Gao G.F."/>
            <person name="Yang R."/>
            <person name="Wang J."/>
            <person name="Yu J."/>
        </authorList>
    </citation>
    <scope>NUCLEOTIDE SEQUENCE [LARGE SCALE GENOMIC DNA]</scope>
    <source>
        <strain>98HAH33</strain>
    </source>
</reference>